<sequence>MAKGARDKIKLESTAGTGHFYTTTKNKRNMPEKMEIMKFDPVARKHVAYKETKIK</sequence>
<organism>
    <name type="scientific">Burkholderia multivorans (strain ATCC 17616 / 249)</name>
    <dbReference type="NCBI Taxonomy" id="395019"/>
    <lineage>
        <taxon>Bacteria</taxon>
        <taxon>Pseudomonadati</taxon>
        <taxon>Pseudomonadota</taxon>
        <taxon>Betaproteobacteria</taxon>
        <taxon>Burkholderiales</taxon>
        <taxon>Burkholderiaceae</taxon>
        <taxon>Burkholderia</taxon>
        <taxon>Burkholderia cepacia complex</taxon>
    </lineage>
</organism>
<accession>A9AHD4</accession>
<comment type="similarity">
    <text evidence="1">Belongs to the bacterial ribosomal protein bL33 family.</text>
</comment>
<name>RL33_BURM1</name>
<keyword id="KW-1185">Reference proteome</keyword>
<keyword id="KW-0687">Ribonucleoprotein</keyword>
<keyword id="KW-0689">Ribosomal protein</keyword>
<protein>
    <recommendedName>
        <fullName evidence="1">Large ribosomal subunit protein bL33</fullName>
    </recommendedName>
    <alternativeName>
        <fullName evidence="3">50S ribosomal protein L33</fullName>
    </alternativeName>
</protein>
<proteinExistence type="inferred from homology"/>
<feature type="chain" id="PRO_1000115107" description="Large ribosomal subunit protein bL33">
    <location>
        <begin position="1"/>
        <end position="55"/>
    </location>
</feature>
<feature type="region of interest" description="Disordered" evidence="2">
    <location>
        <begin position="1"/>
        <end position="24"/>
    </location>
</feature>
<feature type="compositionally biased region" description="Basic and acidic residues" evidence="2">
    <location>
        <begin position="1"/>
        <end position="11"/>
    </location>
</feature>
<feature type="compositionally biased region" description="Polar residues" evidence="2">
    <location>
        <begin position="14"/>
        <end position="24"/>
    </location>
</feature>
<evidence type="ECO:0000255" key="1">
    <source>
        <dbReference type="HAMAP-Rule" id="MF_00294"/>
    </source>
</evidence>
<evidence type="ECO:0000256" key="2">
    <source>
        <dbReference type="SAM" id="MobiDB-lite"/>
    </source>
</evidence>
<evidence type="ECO:0000305" key="3"/>
<dbReference type="EMBL" id="CP000868">
    <property type="protein sequence ID" value="ABX14487.1"/>
    <property type="molecule type" value="Genomic_DNA"/>
</dbReference>
<dbReference type="EMBL" id="AP009385">
    <property type="protein sequence ID" value="BAG44359.1"/>
    <property type="molecule type" value="Genomic_DNA"/>
</dbReference>
<dbReference type="RefSeq" id="WP_004185395.1">
    <property type="nucleotide sequence ID" value="NC_010804.1"/>
</dbReference>
<dbReference type="SMR" id="A9AHD4"/>
<dbReference type="STRING" id="395019.BMULJ_02468"/>
<dbReference type="GeneID" id="95550920"/>
<dbReference type="KEGG" id="bmj:BMULJ_02468"/>
<dbReference type="KEGG" id="bmu:Bmul_0792"/>
<dbReference type="eggNOG" id="COG0267">
    <property type="taxonomic scope" value="Bacteria"/>
</dbReference>
<dbReference type="HOGENOM" id="CLU_190949_1_1_4"/>
<dbReference type="Proteomes" id="UP000008815">
    <property type="component" value="Chromosome 1"/>
</dbReference>
<dbReference type="GO" id="GO:0022625">
    <property type="term" value="C:cytosolic large ribosomal subunit"/>
    <property type="evidence" value="ECO:0007669"/>
    <property type="project" value="TreeGrafter"/>
</dbReference>
<dbReference type="GO" id="GO:0003735">
    <property type="term" value="F:structural constituent of ribosome"/>
    <property type="evidence" value="ECO:0007669"/>
    <property type="project" value="InterPro"/>
</dbReference>
<dbReference type="GO" id="GO:0006412">
    <property type="term" value="P:translation"/>
    <property type="evidence" value="ECO:0007669"/>
    <property type="project" value="UniProtKB-UniRule"/>
</dbReference>
<dbReference type="FunFam" id="2.20.28.120:FF:000001">
    <property type="entry name" value="50S ribosomal protein L33"/>
    <property type="match status" value="1"/>
</dbReference>
<dbReference type="Gene3D" id="2.20.28.120">
    <property type="entry name" value="Ribosomal protein L33"/>
    <property type="match status" value="1"/>
</dbReference>
<dbReference type="HAMAP" id="MF_00294">
    <property type="entry name" value="Ribosomal_bL33"/>
    <property type="match status" value="1"/>
</dbReference>
<dbReference type="InterPro" id="IPR001705">
    <property type="entry name" value="Ribosomal_bL33"/>
</dbReference>
<dbReference type="InterPro" id="IPR018264">
    <property type="entry name" value="Ribosomal_bL33_CS"/>
</dbReference>
<dbReference type="InterPro" id="IPR038584">
    <property type="entry name" value="Ribosomal_bL33_sf"/>
</dbReference>
<dbReference type="InterPro" id="IPR011332">
    <property type="entry name" value="Ribosomal_zn-bd"/>
</dbReference>
<dbReference type="NCBIfam" id="NF001860">
    <property type="entry name" value="PRK00595.1"/>
    <property type="match status" value="1"/>
</dbReference>
<dbReference type="NCBIfam" id="TIGR01023">
    <property type="entry name" value="rpmG_bact"/>
    <property type="match status" value="1"/>
</dbReference>
<dbReference type="PANTHER" id="PTHR15238">
    <property type="entry name" value="54S RIBOSOMAL PROTEIN L39, MITOCHONDRIAL"/>
    <property type="match status" value="1"/>
</dbReference>
<dbReference type="PANTHER" id="PTHR15238:SF1">
    <property type="entry name" value="LARGE RIBOSOMAL SUBUNIT PROTEIN BL33M"/>
    <property type="match status" value="1"/>
</dbReference>
<dbReference type="Pfam" id="PF00471">
    <property type="entry name" value="Ribosomal_L33"/>
    <property type="match status" value="1"/>
</dbReference>
<dbReference type="SUPFAM" id="SSF57829">
    <property type="entry name" value="Zn-binding ribosomal proteins"/>
    <property type="match status" value="1"/>
</dbReference>
<dbReference type="PROSITE" id="PS00582">
    <property type="entry name" value="RIBOSOMAL_L33"/>
    <property type="match status" value="1"/>
</dbReference>
<gene>
    <name evidence="1" type="primary">rpmG</name>
    <name type="ordered locus">Bmul_0792</name>
    <name type="ordered locus">BMULJ_02468</name>
</gene>
<reference key="1">
    <citation type="submission" date="2007-10" db="EMBL/GenBank/DDBJ databases">
        <title>Complete sequence of chromosome 1 of Burkholderia multivorans ATCC 17616.</title>
        <authorList>
            <person name="Copeland A."/>
            <person name="Lucas S."/>
            <person name="Lapidus A."/>
            <person name="Barry K."/>
            <person name="Glavina del Rio T."/>
            <person name="Dalin E."/>
            <person name="Tice H."/>
            <person name="Pitluck S."/>
            <person name="Chain P."/>
            <person name="Malfatti S."/>
            <person name="Shin M."/>
            <person name="Vergez L."/>
            <person name="Schmutz J."/>
            <person name="Larimer F."/>
            <person name="Land M."/>
            <person name="Hauser L."/>
            <person name="Kyrpides N."/>
            <person name="Kim E."/>
            <person name="Tiedje J."/>
            <person name="Richardson P."/>
        </authorList>
    </citation>
    <scope>NUCLEOTIDE SEQUENCE [LARGE SCALE GENOMIC DNA]</scope>
    <source>
        <strain>ATCC 17616 / 249</strain>
    </source>
</reference>
<reference key="2">
    <citation type="submission" date="2007-04" db="EMBL/GenBank/DDBJ databases">
        <title>Complete genome sequence of Burkholderia multivorans ATCC 17616.</title>
        <authorList>
            <person name="Ohtsubo Y."/>
            <person name="Yamashita A."/>
            <person name="Kurokawa K."/>
            <person name="Takami H."/>
            <person name="Yuhara S."/>
            <person name="Nishiyama E."/>
            <person name="Endo R."/>
            <person name="Miyazaki R."/>
            <person name="Ono A."/>
            <person name="Yano K."/>
            <person name="Ito M."/>
            <person name="Sota M."/>
            <person name="Yuji N."/>
            <person name="Hattori M."/>
            <person name="Tsuda M."/>
        </authorList>
    </citation>
    <scope>NUCLEOTIDE SEQUENCE [LARGE SCALE GENOMIC DNA]</scope>
    <source>
        <strain>ATCC 17616 / 249</strain>
    </source>
</reference>